<dbReference type="EMBL" id="D90043">
    <property type="protein sequence ID" value="BAA14098.1"/>
    <property type="molecule type" value="Genomic_DNA"/>
</dbReference>
<dbReference type="PIR" id="I39851">
    <property type="entry name" value="JS0384"/>
</dbReference>
<dbReference type="RefSeq" id="WP_013081864.1">
    <property type="nucleotide sequence ID" value="NZ_JBHVTO010000002.1"/>
</dbReference>
<dbReference type="SMR" id="P40419"/>
<dbReference type="GO" id="GO:0005886">
    <property type="term" value="C:plasma membrane"/>
    <property type="evidence" value="ECO:0007669"/>
    <property type="project" value="UniProtKB-SubCell"/>
</dbReference>
<dbReference type="GO" id="GO:0015144">
    <property type="term" value="F:carbohydrate transmembrane transporter activity"/>
    <property type="evidence" value="ECO:0007669"/>
    <property type="project" value="InterPro"/>
</dbReference>
<dbReference type="GO" id="GO:0030435">
    <property type="term" value="P:sporulation resulting in formation of a cellular spore"/>
    <property type="evidence" value="ECO:0007669"/>
    <property type="project" value="UniProtKB-KW"/>
</dbReference>
<dbReference type="CDD" id="cd23112">
    <property type="entry name" value="glucose_uptake_GlcU"/>
    <property type="match status" value="1"/>
</dbReference>
<dbReference type="InterPro" id="IPR010651">
    <property type="entry name" value="Sugar_transport"/>
</dbReference>
<dbReference type="NCBIfam" id="TIGR00776">
    <property type="entry name" value="RhaT"/>
    <property type="match status" value="1"/>
</dbReference>
<dbReference type="PANTHER" id="PTHR16119">
    <property type="entry name" value="TRANSMEMBRANE PROTEIN 144"/>
    <property type="match status" value="1"/>
</dbReference>
<dbReference type="PANTHER" id="PTHR16119:SF17">
    <property type="entry name" value="TRANSMEMBRANE PROTEIN 144"/>
    <property type="match status" value="1"/>
</dbReference>
<dbReference type="Pfam" id="PF06800">
    <property type="entry name" value="Sugar_transport"/>
    <property type="match status" value="1"/>
</dbReference>
<dbReference type="SUPFAM" id="SSF103481">
    <property type="entry name" value="Multidrug resistance efflux transporter EmrE"/>
    <property type="match status" value="2"/>
</dbReference>
<proteinExistence type="evidence at transcript level"/>
<sequence length="286" mass="30490">MDIFLAVLPAIFWGSIVLFNVKLGGGPYSQTLGTTLGALIFSIGIYIFVHPTFTPLIFGVGVVSGLFWAVGQSNQLKSIDLIGVSKTMPISTGLQLVSTSLFGVIVFHEWSTKTSIILGVLALIFIIVGIVLASLQSKEEKEAEEGKGNFKKGIVILLISTVGYLVYVVVARLFNVDGWSALLPQAIGMVIGGVLLTFKHKPFNKYAIRNIIPGLIWAAGNMFLFISQPKVGVATSFSLSQMGIVISTLGGIIILGEKKTKRQLVGIIIGIILIIIAGVMLGLAKS</sequence>
<protein>
    <recommendedName>
        <fullName>Probable glucose uptake protein GlcU</fullName>
    </recommendedName>
</protein>
<accession>P40419</accession>
<comment type="function">
    <text evidence="1">Involved in the uptake of glucose.</text>
</comment>
<comment type="subcellular location">
    <subcellularLocation>
        <location evidence="3">Cell membrane</location>
        <topology evidence="3">Multi-pass membrane protein</topology>
    </subcellularLocation>
</comment>
<comment type="developmental stage">
    <text>Expressed during sporulation.</text>
</comment>
<comment type="similarity">
    <text evidence="3">Belongs to the GRP transporter (TC 2.A.7.5) family.</text>
</comment>
<organism>
    <name type="scientific">Priestia megaterium</name>
    <name type="common">Bacillus megaterium</name>
    <dbReference type="NCBI Taxonomy" id="1404"/>
    <lineage>
        <taxon>Bacteria</taxon>
        <taxon>Bacillati</taxon>
        <taxon>Bacillota</taxon>
        <taxon>Bacilli</taxon>
        <taxon>Bacillales</taxon>
        <taxon>Bacillaceae</taxon>
        <taxon>Priestia</taxon>
    </lineage>
</organism>
<keyword id="KW-1003">Cell membrane</keyword>
<keyword id="KW-0472">Membrane</keyword>
<keyword id="KW-0749">Sporulation</keyword>
<keyword id="KW-0762">Sugar transport</keyword>
<keyword id="KW-0812">Transmembrane</keyword>
<keyword id="KW-1133">Transmembrane helix</keyword>
<keyword id="KW-0813">Transport</keyword>
<gene>
    <name type="primary">glcU</name>
</gene>
<feature type="chain" id="PRO_0000213622" description="Probable glucose uptake protein GlcU">
    <location>
        <begin position="1"/>
        <end position="286"/>
    </location>
</feature>
<feature type="transmembrane region" description="Helical" evidence="2">
    <location>
        <begin position="4"/>
        <end position="21"/>
    </location>
</feature>
<feature type="transmembrane region" description="Helical" evidence="2">
    <location>
        <begin position="28"/>
        <end position="50"/>
    </location>
</feature>
<feature type="transmembrane region" description="Helical" evidence="2">
    <location>
        <begin position="54"/>
        <end position="71"/>
    </location>
</feature>
<feature type="transmembrane region" description="Helical" evidence="2">
    <location>
        <begin position="84"/>
        <end position="106"/>
    </location>
</feature>
<feature type="transmembrane region" description="Helical" evidence="2">
    <location>
        <begin position="116"/>
        <end position="135"/>
    </location>
</feature>
<feature type="transmembrane region" description="Helical" evidence="2">
    <location>
        <begin position="154"/>
        <end position="176"/>
    </location>
</feature>
<feature type="transmembrane region" description="Helical" evidence="2">
    <location>
        <begin position="181"/>
        <end position="198"/>
    </location>
</feature>
<feature type="transmembrane region" description="Helical" evidence="2">
    <location>
        <begin position="211"/>
        <end position="228"/>
    </location>
</feature>
<feature type="transmembrane region" description="Helical" evidence="2">
    <location>
        <begin position="233"/>
        <end position="255"/>
    </location>
</feature>
<feature type="transmembrane region" description="Helical" evidence="2">
    <location>
        <begin position="262"/>
        <end position="284"/>
    </location>
</feature>
<evidence type="ECO:0000250" key="1"/>
<evidence type="ECO:0000255" key="2"/>
<evidence type="ECO:0000305" key="3"/>
<name>GLCU_PRIMG</name>
<reference key="1">
    <citation type="journal article" date="1990" name="J. Ferment. Bioeng.">
        <title>Structure of isozyme genes of glucose dehydrogenase from Bacillus megaterium IAM1030.</title>
        <authorList>
            <person name="Mitamura T."/>
            <person name="Ebora R.V."/>
            <person name="Nakai T."/>
            <person name="Makino Y."/>
            <person name="Negoro S."/>
            <person name="Urabe I."/>
            <person name="Okada H."/>
        </authorList>
    </citation>
    <scope>NUCLEOTIDE SEQUENCE [GENOMIC DNA]</scope>
    <source>
        <strain>IAM 1030 / JCM 20016</strain>
    </source>
</reference>